<evidence type="ECO:0000255" key="1">
    <source>
        <dbReference type="HAMAP-Rule" id="MF_01031"/>
    </source>
</evidence>
<protein>
    <recommendedName>
        <fullName evidence="1">3-isopropylmalate dehydratase small subunit</fullName>
        <ecNumber evidence="1">4.2.1.33</ecNumber>
    </recommendedName>
    <alternativeName>
        <fullName evidence="1">Alpha-IPM isomerase</fullName>
        <shortName evidence="1">IPMI</shortName>
    </alternativeName>
    <alternativeName>
        <fullName evidence="1">Isopropylmalate isomerase</fullName>
    </alternativeName>
</protein>
<comment type="function">
    <text evidence="1">Catalyzes the isomerization between 2-isopropylmalate and 3-isopropylmalate, via the formation of 2-isopropylmaleate.</text>
</comment>
<comment type="catalytic activity">
    <reaction evidence="1">
        <text>(2R,3S)-3-isopropylmalate = (2S)-2-isopropylmalate</text>
        <dbReference type="Rhea" id="RHEA:32287"/>
        <dbReference type="ChEBI" id="CHEBI:1178"/>
        <dbReference type="ChEBI" id="CHEBI:35121"/>
        <dbReference type="EC" id="4.2.1.33"/>
    </reaction>
</comment>
<comment type="pathway">
    <text evidence="1">Amino-acid biosynthesis; L-leucine biosynthesis; L-leucine from 3-methyl-2-oxobutanoate: step 2/4.</text>
</comment>
<comment type="subunit">
    <text evidence="1">Heterodimer of LeuC and LeuD.</text>
</comment>
<comment type="similarity">
    <text evidence="1">Belongs to the LeuD family. LeuD type 1 subfamily.</text>
</comment>
<organism>
    <name type="scientific">Allorhizobium ampelinum (strain ATCC BAA-846 / DSM 112012 / S4)</name>
    <name type="common">Agrobacterium vitis (strain S4)</name>
    <dbReference type="NCBI Taxonomy" id="311402"/>
    <lineage>
        <taxon>Bacteria</taxon>
        <taxon>Pseudomonadati</taxon>
        <taxon>Pseudomonadota</taxon>
        <taxon>Alphaproteobacteria</taxon>
        <taxon>Hyphomicrobiales</taxon>
        <taxon>Rhizobiaceae</taxon>
        <taxon>Rhizobium/Agrobacterium group</taxon>
        <taxon>Allorhizobium</taxon>
        <taxon>Allorhizobium ampelinum</taxon>
    </lineage>
</organism>
<reference key="1">
    <citation type="journal article" date="2009" name="J. Bacteriol.">
        <title>Genome sequences of three Agrobacterium biovars help elucidate the evolution of multichromosome genomes in bacteria.</title>
        <authorList>
            <person name="Slater S.C."/>
            <person name="Goldman B.S."/>
            <person name="Goodner B."/>
            <person name="Setubal J.C."/>
            <person name="Farrand S.K."/>
            <person name="Nester E.W."/>
            <person name="Burr T.J."/>
            <person name="Banta L."/>
            <person name="Dickerman A.W."/>
            <person name="Paulsen I."/>
            <person name="Otten L."/>
            <person name="Suen G."/>
            <person name="Welch R."/>
            <person name="Almeida N.F."/>
            <person name="Arnold F."/>
            <person name="Burton O.T."/>
            <person name="Du Z."/>
            <person name="Ewing A."/>
            <person name="Godsy E."/>
            <person name="Heisel S."/>
            <person name="Houmiel K.L."/>
            <person name="Jhaveri J."/>
            <person name="Lu J."/>
            <person name="Miller N.M."/>
            <person name="Norton S."/>
            <person name="Chen Q."/>
            <person name="Phoolcharoen W."/>
            <person name="Ohlin V."/>
            <person name="Ondrusek D."/>
            <person name="Pride N."/>
            <person name="Stricklin S.L."/>
            <person name="Sun J."/>
            <person name="Wheeler C."/>
            <person name="Wilson L."/>
            <person name="Zhu H."/>
            <person name="Wood D.W."/>
        </authorList>
    </citation>
    <scope>NUCLEOTIDE SEQUENCE [LARGE SCALE GENOMIC DNA]</scope>
    <source>
        <strain>ATCC BAA-846 / DSM 112012 / S4</strain>
    </source>
</reference>
<feature type="chain" id="PRO_1000149396" description="3-isopropylmalate dehydratase small subunit">
    <location>
        <begin position="1"/>
        <end position="201"/>
    </location>
</feature>
<keyword id="KW-0028">Amino-acid biosynthesis</keyword>
<keyword id="KW-0100">Branched-chain amino acid biosynthesis</keyword>
<keyword id="KW-0432">Leucine biosynthesis</keyword>
<keyword id="KW-0456">Lyase</keyword>
<keyword id="KW-1185">Reference proteome</keyword>
<accession>B9JV26</accession>
<sequence length="201" mass="21956">MEKFTKLTGVAAPLPVVNIDTDMIIPKDYLKTIKRTGLGTGLFAEARYHQDGSINQDFVLNKPAYQNAKILVAGDNFGCGSSREHAPWALLDFGIRCVISTSFADIFYNNCFKNGILPIVVSQENLEKLMDDAQRGSNAVVTVDLETQEITGPDGGSISFEIDEFKRHCMLNGLDDIGLTMEKSSAIASFETANAASRPWA</sequence>
<dbReference type="EC" id="4.2.1.33" evidence="1"/>
<dbReference type="EMBL" id="CP000633">
    <property type="protein sequence ID" value="ACM38164.1"/>
    <property type="molecule type" value="Genomic_DNA"/>
</dbReference>
<dbReference type="RefSeq" id="WP_015917574.1">
    <property type="nucleotide sequence ID" value="NC_011989.1"/>
</dbReference>
<dbReference type="SMR" id="B9JV26"/>
<dbReference type="STRING" id="311402.Avi_4358"/>
<dbReference type="KEGG" id="avi:Avi_4358"/>
<dbReference type="eggNOG" id="COG0066">
    <property type="taxonomic scope" value="Bacteria"/>
</dbReference>
<dbReference type="HOGENOM" id="CLU_081378_0_3_5"/>
<dbReference type="UniPathway" id="UPA00048">
    <property type="reaction ID" value="UER00071"/>
</dbReference>
<dbReference type="Proteomes" id="UP000001596">
    <property type="component" value="Chromosome 1"/>
</dbReference>
<dbReference type="GO" id="GO:0009316">
    <property type="term" value="C:3-isopropylmalate dehydratase complex"/>
    <property type="evidence" value="ECO:0007669"/>
    <property type="project" value="InterPro"/>
</dbReference>
<dbReference type="GO" id="GO:0003861">
    <property type="term" value="F:3-isopropylmalate dehydratase activity"/>
    <property type="evidence" value="ECO:0007669"/>
    <property type="project" value="UniProtKB-UniRule"/>
</dbReference>
<dbReference type="GO" id="GO:0009098">
    <property type="term" value="P:L-leucine biosynthetic process"/>
    <property type="evidence" value="ECO:0007669"/>
    <property type="project" value="UniProtKB-UniRule"/>
</dbReference>
<dbReference type="CDD" id="cd01577">
    <property type="entry name" value="IPMI_Swivel"/>
    <property type="match status" value="1"/>
</dbReference>
<dbReference type="FunFam" id="3.20.19.10:FF:000003">
    <property type="entry name" value="3-isopropylmalate dehydratase small subunit"/>
    <property type="match status" value="1"/>
</dbReference>
<dbReference type="Gene3D" id="3.20.19.10">
    <property type="entry name" value="Aconitase, domain 4"/>
    <property type="match status" value="1"/>
</dbReference>
<dbReference type="HAMAP" id="MF_01031">
    <property type="entry name" value="LeuD_type1"/>
    <property type="match status" value="1"/>
</dbReference>
<dbReference type="InterPro" id="IPR004431">
    <property type="entry name" value="3-IsopropMal_deHydase_ssu"/>
</dbReference>
<dbReference type="InterPro" id="IPR015928">
    <property type="entry name" value="Aconitase/3IPM_dehydase_swvl"/>
</dbReference>
<dbReference type="InterPro" id="IPR000573">
    <property type="entry name" value="AconitaseA/IPMdHydase_ssu_swvl"/>
</dbReference>
<dbReference type="InterPro" id="IPR033940">
    <property type="entry name" value="IPMI_Swivel"/>
</dbReference>
<dbReference type="InterPro" id="IPR050075">
    <property type="entry name" value="LeuD"/>
</dbReference>
<dbReference type="NCBIfam" id="TIGR00171">
    <property type="entry name" value="leuD"/>
    <property type="match status" value="1"/>
</dbReference>
<dbReference type="NCBIfam" id="NF002458">
    <property type="entry name" value="PRK01641.1"/>
    <property type="match status" value="1"/>
</dbReference>
<dbReference type="PANTHER" id="PTHR43345:SF5">
    <property type="entry name" value="3-ISOPROPYLMALATE DEHYDRATASE SMALL SUBUNIT"/>
    <property type="match status" value="1"/>
</dbReference>
<dbReference type="PANTHER" id="PTHR43345">
    <property type="entry name" value="3-ISOPROPYLMALATE DEHYDRATASE SMALL SUBUNIT 2-RELATED-RELATED"/>
    <property type="match status" value="1"/>
</dbReference>
<dbReference type="Pfam" id="PF00694">
    <property type="entry name" value="Aconitase_C"/>
    <property type="match status" value="1"/>
</dbReference>
<dbReference type="SUPFAM" id="SSF52016">
    <property type="entry name" value="LeuD/IlvD-like"/>
    <property type="match status" value="1"/>
</dbReference>
<proteinExistence type="inferred from homology"/>
<name>LEUD_ALLAM</name>
<gene>
    <name evidence="1" type="primary">leuD</name>
    <name type="ordered locus">Avi_4358</name>
</gene>